<accession>A4T1U3</accession>
<reference key="1">
    <citation type="submission" date="2007-04" db="EMBL/GenBank/DDBJ databases">
        <title>Complete sequence of chromosome of Mycobacterium gilvum PYR-GCK.</title>
        <authorList>
            <consortium name="US DOE Joint Genome Institute"/>
            <person name="Copeland A."/>
            <person name="Lucas S."/>
            <person name="Lapidus A."/>
            <person name="Barry K."/>
            <person name="Detter J.C."/>
            <person name="Glavina del Rio T."/>
            <person name="Hammon N."/>
            <person name="Israni S."/>
            <person name="Dalin E."/>
            <person name="Tice H."/>
            <person name="Pitluck S."/>
            <person name="Chain P."/>
            <person name="Malfatti S."/>
            <person name="Shin M."/>
            <person name="Vergez L."/>
            <person name="Schmutz J."/>
            <person name="Larimer F."/>
            <person name="Land M."/>
            <person name="Hauser L."/>
            <person name="Kyrpides N."/>
            <person name="Mikhailova N."/>
            <person name="Miller C."/>
            <person name="Richardson P."/>
        </authorList>
    </citation>
    <scope>NUCLEOTIDE SEQUENCE [LARGE SCALE GENOMIC DNA]</scope>
    <source>
        <strain>PYR-GCK</strain>
    </source>
</reference>
<comment type="function">
    <text evidence="1">Involved in the binding of tRNA to the ribosomes.</text>
</comment>
<comment type="subunit">
    <text evidence="1">Part of the 30S ribosomal subunit.</text>
</comment>
<comment type="similarity">
    <text evidence="1">Belongs to the universal ribosomal protein uS10 family.</text>
</comment>
<evidence type="ECO:0000255" key="1">
    <source>
        <dbReference type="HAMAP-Rule" id="MF_00508"/>
    </source>
</evidence>
<evidence type="ECO:0000305" key="2"/>
<sequence length="101" mass="11433">MAGQKIRIRLKAYDHEAIDASARKIVETVTRTGASVVGPVPLPTEKNVYCVIRSPHKYKDSREHFEMRTHKRLIDILDPTPKTVDALMRIDLPASVDVNIQ</sequence>
<proteinExistence type="inferred from homology"/>
<keyword id="KW-0687">Ribonucleoprotein</keyword>
<keyword id="KW-0689">Ribosomal protein</keyword>
<protein>
    <recommendedName>
        <fullName evidence="1">Small ribosomal subunit protein uS10</fullName>
    </recommendedName>
    <alternativeName>
        <fullName evidence="2">30S ribosomal protein S10</fullName>
    </alternativeName>
</protein>
<name>RS10_MYCGI</name>
<feature type="chain" id="PRO_1000081556" description="Small ribosomal subunit protein uS10">
    <location>
        <begin position="1"/>
        <end position="101"/>
    </location>
</feature>
<dbReference type="EMBL" id="CP000656">
    <property type="protein sequence ID" value="ABP47516.1"/>
    <property type="molecule type" value="Genomic_DNA"/>
</dbReference>
<dbReference type="SMR" id="A4T1U3"/>
<dbReference type="STRING" id="350054.Mflv_5050"/>
<dbReference type="KEGG" id="mgi:Mflv_5050"/>
<dbReference type="eggNOG" id="COG0051">
    <property type="taxonomic scope" value="Bacteria"/>
</dbReference>
<dbReference type="HOGENOM" id="CLU_122625_1_3_11"/>
<dbReference type="OrthoDB" id="9804464at2"/>
<dbReference type="GO" id="GO:1990904">
    <property type="term" value="C:ribonucleoprotein complex"/>
    <property type="evidence" value="ECO:0007669"/>
    <property type="project" value="UniProtKB-KW"/>
</dbReference>
<dbReference type="GO" id="GO:0005840">
    <property type="term" value="C:ribosome"/>
    <property type="evidence" value="ECO:0007669"/>
    <property type="project" value="UniProtKB-KW"/>
</dbReference>
<dbReference type="GO" id="GO:0003735">
    <property type="term" value="F:structural constituent of ribosome"/>
    <property type="evidence" value="ECO:0007669"/>
    <property type="project" value="InterPro"/>
</dbReference>
<dbReference type="GO" id="GO:0000049">
    <property type="term" value="F:tRNA binding"/>
    <property type="evidence" value="ECO:0007669"/>
    <property type="project" value="UniProtKB-UniRule"/>
</dbReference>
<dbReference type="GO" id="GO:0006412">
    <property type="term" value="P:translation"/>
    <property type="evidence" value="ECO:0007669"/>
    <property type="project" value="UniProtKB-UniRule"/>
</dbReference>
<dbReference type="FunFam" id="3.30.70.600:FF:000001">
    <property type="entry name" value="30S ribosomal protein S10"/>
    <property type="match status" value="1"/>
</dbReference>
<dbReference type="Gene3D" id="3.30.70.600">
    <property type="entry name" value="Ribosomal protein S10 domain"/>
    <property type="match status" value="1"/>
</dbReference>
<dbReference type="HAMAP" id="MF_00508">
    <property type="entry name" value="Ribosomal_uS10"/>
    <property type="match status" value="1"/>
</dbReference>
<dbReference type="InterPro" id="IPR001848">
    <property type="entry name" value="Ribosomal_uS10"/>
</dbReference>
<dbReference type="InterPro" id="IPR018268">
    <property type="entry name" value="Ribosomal_uS10_CS"/>
</dbReference>
<dbReference type="InterPro" id="IPR027486">
    <property type="entry name" value="Ribosomal_uS10_dom"/>
</dbReference>
<dbReference type="InterPro" id="IPR036838">
    <property type="entry name" value="Ribosomal_uS10_dom_sf"/>
</dbReference>
<dbReference type="NCBIfam" id="NF001861">
    <property type="entry name" value="PRK00596.1"/>
    <property type="match status" value="1"/>
</dbReference>
<dbReference type="NCBIfam" id="TIGR01049">
    <property type="entry name" value="rpsJ_bact"/>
    <property type="match status" value="1"/>
</dbReference>
<dbReference type="PANTHER" id="PTHR11700">
    <property type="entry name" value="30S RIBOSOMAL PROTEIN S10 FAMILY MEMBER"/>
    <property type="match status" value="1"/>
</dbReference>
<dbReference type="Pfam" id="PF00338">
    <property type="entry name" value="Ribosomal_S10"/>
    <property type="match status" value="1"/>
</dbReference>
<dbReference type="PRINTS" id="PR00971">
    <property type="entry name" value="RIBOSOMALS10"/>
</dbReference>
<dbReference type="SMART" id="SM01403">
    <property type="entry name" value="Ribosomal_S10"/>
    <property type="match status" value="1"/>
</dbReference>
<dbReference type="SUPFAM" id="SSF54999">
    <property type="entry name" value="Ribosomal protein S10"/>
    <property type="match status" value="1"/>
</dbReference>
<dbReference type="PROSITE" id="PS00361">
    <property type="entry name" value="RIBOSOMAL_S10"/>
    <property type="match status" value="1"/>
</dbReference>
<gene>
    <name evidence="1" type="primary">rpsJ</name>
    <name type="ordered locus">Mflv_5050</name>
</gene>
<organism>
    <name type="scientific">Mycolicibacterium gilvum (strain PYR-GCK)</name>
    <name type="common">Mycobacterium gilvum (strain PYR-GCK)</name>
    <dbReference type="NCBI Taxonomy" id="350054"/>
    <lineage>
        <taxon>Bacteria</taxon>
        <taxon>Bacillati</taxon>
        <taxon>Actinomycetota</taxon>
        <taxon>Actinomycetes</taxon>
        <taxon>Mycobacteriales</taxon>
        <taxon>Mycobacteriaceae</taxon>
        <taxon>Mycolicibacterium</taxon>
    </lineage>
</organism>